<feature type="chain" id="PRO_1000138195" description="Regulator of sigma D">
    <location>
        <begin position="1"/>
        <end position="158"/>
    </location>
</feature>
<organism>
    <name type="scientific">Escherichia coli (strain SMS-3-5 / SECEC)</name>
    <dbReference type="NCBI Taxonomy" id="439855"/>
    <lineage>
        <taxon>Bacteria</taxon>
        <taxon>Pseudomonadati</taxon>
        <taxon>Pseudomonadota</taxon>
        <taxon>Gammaproteobacteria</taxon>
        <taxon>Enterobacterales</taxon>
        <taxon>Enterobacteriaceae</taxon>
        <taxon>Escherichia</taxon>
    </lineage>
</organism>
<dbReference type="EMBL" id="CP000970">
    <property type="protein sequence ID" value="ACB17682.1"/>
    <property type="molecule type" value="Genomic_DNA"/>
</dbReference>
<dbReference type="RefSeq" id="WP_000934302.1">
    <property type="nucleotide sequence ID" value="NC_010498.1"/>
</dbReference>
<dbReference type="SMR" id="B1LNU7"/>
<dbReference type="GeneID" id="75205513"/>
<dbReference type="KEGG" id="ecm:EcSMS35_4443"/>
<dbReference type="HOGENOM" id="CLU_142729_0_0_6"/>
<dbReference type="Proteomes" id="UP000007011">
    <property type="component" value="Chromosome"/>
</dbReference>
<dbReference type="GO" id="GO:0005737">
    <property type="term" value="C:cytoplasm"/>
    <property type="evidence" value="ECO:0007669"/>
    <property type="project" value="UniProtKB-SubCell"/>
</dbReference>
<dbReference type="GO" id="GO:0006355">
    <property type="term" value="P:regulation of DNA-templated transcription"/>
    <property type="evidence" value="ECO:0007669"/>
    <property type="project" value="InterPro"/>
</dbReference>
<dbReference type="FunFam" id="1.20.120.1370:FF:000001">
    <property type="entry name" value="Regulator of sigma D"/>
    <property type="match status" value="1"/>
</dbReference>
<dbReference type="Gene3D" id="1.20.120.1370">
    <property type="entry name" value="Regulator of RNA polymerase sigma(70) subunit, domain 4"/>
    <property type="match status" value="1"/>
</dbReference>
<dbReference type="HAMAP" id="MF_01181">
    <property type="entry name" value="Rsd"/>
    <property type="match status" value="1"/>
</dbReference>
<dbReference type="InterPro" id="IPR038309">
    <property type="entry name" value="Rsd/AlgQ_sf"/>
</dbReference>
<dbReference type="InterPro" id="IPR023785">
    <property type="entry name" value="Sigma70_reg_Rsd"/>
</dbReference>
<dbReference type="InterPro" id="IPR007448">
    <property type="entry name" value="Sigma70_reg_Rsd_AlgQ"/>
</dbReference>
<dbReference type="NCBIfam" id="NF008723">
    <property type="entry name" value="PRK11718.1"/>
    <property type="match status" value="1"/>
</dbReference>
<dbReference type="Pfam" id="PF04353">
    <property type="entry name" value="Rsd_AlgQ"/>
    <property type="match status" value="1"/>
</dbReference>
<dbReference type="PIRSF" id="PIRSF016548">
    <property type="entry name" value="Rsd_AlgQ"/>
    <property type="match status" value="1"/>
</dbReference>
<reference key="1">
    <citation type="journal article" date="2008" name="J. Bacteriol.">
        <title>Insights into the environmental resistance gene pool from the genome sequence of the multidrug-resistant environmental isolate Escherichia coli SMS-3-5.</title>
        <authorList>
            <person name="Fricke W.F."/>
            <person name="Wright M.S."/>
            <person name="Lindell A.H."/>
            <person name="Harkins D.M."/>
            <person name="Baker-Austin C."/>
            <person name="Ravel J."/>
            <person name="Stepanauskas R."/>
        </authorList>
    </citation>
    <scope>NUCLEOTIDE SEQUENCE [LARGE SCALE GENOMIC DNA]</scope>
    <source>
        <strain>SMS-3-5 / SECEC</strain>
    </source>
</reference>
<name>RSD_ECOSM</name>
<evidence type="ECO:0000255" key="1">
    <source>
        <dbReference type="HAMAP-Rule" id="MF_01181"/>
    </source>
</evidence>
<keyword id="KW-0963">Cytoplasm</keyword>
<keyword id="KW-0804">Transcription</keyword>
<keyword id="KW-0805">Transcription regulation</keyword>
<protein>
    <recommendedName>
        <fullName evidence="1">Regulator of sigma D</fullName>
    </recommendedName>
</protein>
<sequence>MLNQLDNLTERVRGSNKLVDRWLHVRKHLLVAYYNLVGIKPGKESYMRLNEKALDDFCQSLVDYLSAGHFSIYERILHKLEGNGQLARAAKIWPQLEANTQQIMDYYDSSLETAIDHDNYLEFQQVLSDIGEALEARFVLEDKLILLVLDAARVKHPA</sequence>
<accession>B1LNU7</accession>
<proteinExistence type="inferred from homology"/>
<gene>
    <name evidence="1" type="primary">rsd</name>
    <name type="ordered locus">EcSMS35_4443</name>
</gene>
<comment type="function">
    <text evidence="1">Binds RpoD and negatively regulates RpoD-mediated transcription activation by preventing the interaction between the primary sigma factor RpoD with the catalytic core of the RNA polymerase and with promoter DNA. May be involved in replacement of the RNA polymerase sigma subunit from RpoD to RpoS during the transition from exponential growth to the stationary phase.</text>
</comment>
<comment type="subunit">
    <text evidence="1">Interacts with RpoD.</text>
</comment>
<comment type="subcellular location">
    <subcellularLocation>
        <location evidence="1">Cytoplasm</location>
    </subcellularLocation>
</comment>
<comment type="similarity">
    <text evidence="1">Belongs to the Rsd/AlgQ family.</text>
</comment>